<name>NHAA_PECCP</name>
<evidence type="ECO:0000255" key="1">
    <source>
        <dbReference type="HAMAP-Rule" id="MF_01844"/>
    </source>
</evidence>
<gene>
    <name evidence="1" type="primary">nhaA</name>
    <name type="ordered locus">PC1_3657</name>
</gene>
<feature type="chain" id="PRO_1000216103" description="Na(+)/H(+) antiporter NhaA">
    <location>
        <begin position="1"/>
        <end position="398"/>
    </location>
</feature>
<feature type="transmembrane region" description="Helical" evidence="1">
    <location>
        <begin position="14"/>
        <end position="34"/>
    </location>
</feature>
<feature type="transmembrane region" description="Helical" evidence="1">
    <location>
        <begin position="60"/>
        <end position="80"/>
    </location>
</feature>
<feature type="transmembrane region" description="Helical" evidence="1">
    <location>
        <begin position="96"/>
        <end position="116"/>
    </location>
</feature>
<feature type="transmembrane region" description="Helical" evidence="1">
    <location>
        <begin position="125"/>
        <end position="145"/>
    </location>
</feature>
<feature type="transmembrane region" description="Helical" evidence="1">
    <location>
        <begin position="155"/>
        <end position="175"/>
    </location>
</feature>
<feature type="transmembrane region" description="Helical" evidence="1">
    <location>
        <begin position="179"/>
        <end position="199"/>
    </location>
</feature>
<feature type="transmembrane region" description="Helical" evidence="1">
    <location>
        <begin position="214"/>
        <end position="234"/>
    </location>
</feature>
<feature type="transmembrane region" description="Helical" evidence="1">
    <location>
        <begin position="263"/>
        <end position="283"/>
    </location>
</feature>
<feature type="transmembrane region" description="Helical" evidence="1">
    <location>
        <begin position="292"/>
        <end position="312"/>
    </location>
</feature>
<feature type="transmembrane region" description="Helical" evidence="1">
    <location>
        <begin position="330"/>
        <end position="350"/>
    </location>
</feature>
<feature type="transmembrane region" description="Helical" evidence="1">
    <location>
        <begin position="362"/>
        <end position="382"/>
    </location>
</feature>
<dbReference type="EMBL" id="CP001657">
    <property type="protein sequence ID" value="ACT14672.1"/>
    <property type="molecule type" value="Genomic_DNA"/>
</dbReference>
<dbReference type="RefSeq" id="WP_015841787.1">
    <property type="nucleotide sequence ID" value="NC_012917.1"/>
</dbReference>
<dbReference type="SMR" id="C6DF08"/>
<dbReference type="STRING" id="561230.PC1_3657"/>
<dbReference type="KEGG" id="pct:PC1_3657"/>
<dbReference type="eggNOG" id="COG3004">
    <property type="taxonomic scope" value="Bacteria"/>
</dbReference>
<dbReference type="HOGENOM" id="CLU_015803_1_0_6"/>
<dbReference type="OrthoDB" id="9808135at2"/>
<dbReference type="Proteomes" id="UP000002736">
    <property type="component" value="Chromosome"/>
</dbReference>
<dbReference type="GO" id="GO:0005886">
    <property type="term" value="C:plasma membrane"/>
    <property type="evidence" value="ECO:0007669"/>
    <property type="project" value="UniProtKB-SubCell"/>
</dbReference>
<dbReference type="GO" id="GO:0015385">
    <property type="term" value="F:sodium:proton antiporter activity"/>
    <property type="evidence" value="ECO:0007669"/>
    <property type="project" value="TreeGrafter"/>
</dbReference>
<dbReference type="GO" id="GO:0006885">
    <property type="term" value="P:regulation of pH"/>
    <property type="evidence" value="ECO:0007669"/>
    <property type="project" value="InterPro"/>
</dbReference>
<dbReference type="Gene3D" id="1.20.1530.10">
    <property type="entry name" value="Na+/H+ antiporter like domain"/>
    <property type="match status" value="1"/>
</dbReference>
<dbReference type="HAMAP" id="MF_01844">
    <property type="entry name" value="NhaA"/>
    <property type="match status" value="1"/>
</dbReference>
<dbReference type="InterPro" id="IPR023171">
    <property type="entry name" value="Na/H_antiporter_dom_sf"/>
</dbReference>
<dbReference type="InterPro" id="IPR004670">
    <property type="entry name" value="NhaA"/>
</dbReference>
<dbReference type="NCBIfam" id="TIGR00773">
    <property type="entry name" value="NhaA"/>
    <property type="match status" value="1"/>
</dbReference>
<dbReference type="NCBIfam" id="NF007111">
    <property type="entry name" value="PRK09560.1"/>
    <property type="match status" value="1"/>
</dbReference>
<dbReference type="NCBIfam" id="NF007112">
    <property type="entry name" value="PRK09561.1"/>
    <property type="match status" value="1"/>
</dbReference>
<dbReference type="PANTHER" id="PTHR30341:SF0">
    <property type="entry name" value="NA(+)_H(+) ANTIPORTER NHAA"/>
    <property type="match status" value="1"/>
</dbReference>
<dbReference type="PANTHER" id="PTHR30341">
    <property type="entry name" value="SODIUM ION/PROTON ANTIPORTER NHAA-RELATED"/>
    <property type="match status" value="1"/>
</dbReference>
<dbReference type="Pfam" id="PF06965">
    <property type="entry name" value="Na_H_antiport_1"/>
    <property type="match status" value="1"/>
</dbReference>
<accession>C6DF08</accession>
<organism>
    <name type="scientific">Pectobacterium carotovorum subsp. carotovorum (strain PC1)</name>
    <dbReference type="NCBI Taxonomy" id="561230"/>
    <lineage>
        <taxon>Bacteria</taxon>
        <taxon>Pseudomonadati</taxon>
        <taxon>Pseudomonadota</taxon>
        <taxon>Gammaproteobacteria</taxon>
        <taxon>Enterobacterales</taxon>
        <taxon>Pectobacteriaceae</taxon>
        <taxon>Pectobacterium</taxon>
    </lineage>
</organism>
<proteinExistence type="inferred from homology"/>
<reference key="1">
    <citation type="submission" date="2009-07" db="EMBL/GenBank/DDBJ databases">
        <title>Complete sequence of Pectobacterium carotovorum subsp. carotovorum PC1.</title>
        <authorList>
            <consortium name="US DOE Joint Genome Institute"/>
            <person name="Lucas S."/>
            <person name="Copeland A."/>
            <person name="Lapidus A."/>
            <person name="Glavina del Rio T."/>
            <person name="Tice H."/>
            <person name="Bruce D."/>
            <person name="Goodwin L."/>
            <person name="Pitluck S."/>
            <person name="Munk A.C."/>
            <person name="Brettin T."/>
            <person name="Detter J.C."/>
            <person name="Han C."/>
            <person name="Tapia R."/>
            <person name="Larimer F."/>
            <person name="Land M."/>
            <person name="Hauser L."/>
            <person name="Kyrpides N."/>
            <person name="Mikhailova N."/>
            <person name="Balakrishnan V."/>
            <person name="Glasner J."/>
            <person name="Perna N.T."/>
        </authorList>
    </citation>
    <scope>NUCLEOTIDE SEQUENCE [LARGE SCALE GENOMIC DNA]</scope>
    <source>
        <strain>PC1</strain>
    </source>
</reference>
<comment type="function">
    <text evidence="1">Na(+)/H(+) antiporter that extrudes sodium in exchange for external protons.</text>
</comment>
<comment type="catalytic activity">
    <reaction evidence="1">
        <text>Na(+)(in) + 2 H(+)(out) = Na(+)(out) + 2 H(+)(in)</text>
        <dbReference type="Rhea" id="RHEA:29251"/>
        <dbReference type="ChEBI" id="CHEBI:15378"/>
        <dbReference type="ChEBI" id="CHEBI:29101"/>
    </reaction>
    <physiologicalReaction direction="left-to-right" evidence="1">
        <dbReference type="Rhea" id="RHEA:29252"/>
    </physiologicalReaction>
</comment>
<comment type="subcellular location">
    <subcellularLocation>
        <location evidence="1">Cell inner membrane</location>
        <topology evidence="1">Multi-pass membrane protein</topology>
    </subcellularLocation>
</comment>
<comment type="similarity">
    <text evidence="1">Belongs to the NhaA Na(+)/H(+) (TC 2.A.33) antiporter family.</text>
</comment>
<protein>
    <recommendedName>
        <fullName evidence="1">Na(+)/H(+) antiporter NhaA</fullName>
    </recommendedName>
    <alternativeName>
        <fullName evidence="1">Sodium/proton antiporter NhaA</fullName>
    </alternativeName>
</protein>
<sequence>MITMIRRFIQLDAAAGVMLMMATVLALTFANWSVTAAGYQQFLMMPVEMRFGALEINKNLLLWINDGLMAIFFLLIGLEVKRELVEGSLASRQQAMLPLAAAVGGMVFPALFFLLFNANDEVTRVGWAIPAATDIAFAIGVLTLLGKRVPAGLKVFLLALAIIDDLGAILIIALFYTQQIFWPALGGAVLAVAALAYLNRQQVRKTSAYLLVGIVLWVCILKCGVHATLAGVIVGFFIPLRTSNGEPSPAVTLEHGLQTWVAFLIIPLFAFANAGIVLQGIVLEKLFSPLSLGIAAGLLVGKPLGITLLSWLTIRLGYARLPAGVGFSQIVAVSVLCGIGFTMSIFITLLAFSGGDAELITYAKLGILLASGLAALLGYLALRGVLPVLDKAVQPCKG</sequence>
<keyword id="KW-0050">Antiport</keyword>
<keyword id="KW-0997">Cell inner membrane</keyword>
<keyword id="KW-1003">Cell membrane</keyword>
<keyword id="KW-0406">Ion transport</keyword>
<keyword id="KW-0472">Membrane</keyword>
<keyword id="KW-0915">Sodium</keyword>
<keyword id="KW-0739">Sodium transport</keyword>
<keyword id="KW-0812">Transmembrane</keyword>
<keyword id="KW-1133">Transmembrane helix</keyword>
<keyword id="KW-0813">Transport</keyword>